<evidence type="ECO:0000255" key="1">
    <source>
        <dbReference type="HAMAP-Rule" id="MF_00463"/>
    </source>
</evidence>
<reference key="1">
    <citation type="submission" date="2007-06" db="EMBL/GenBank/DDBJ databases">
        <authorList>
            <person name="Dodson R.J."/>
            <person name="Harkins D."/>
            <person name="Paulsen I.T."/>
        </authorList>
    </citation>
    <scope>NUCLEOTIDE SEQUENCE [LARGE SCALE GENOMIC DNA]</scope>
    <source>
        <strain>DSM 24068 / PA7</strain>
    </source>
</reference>
<sequence length="188" mass="19968">MNGVLLAIGVLLPICLASGALLGYAAVRLRVQGDPVAERVNALLPQTQCGQCGYPGCKPYAEAIAAGDRINKCPPGGEATIQALADLLDLEPEPLDAAEETPPRVAYIREAECIGCTKCIQACPVDAIVGAARLMHTVIADECTGCDLCLEPCPVDCIEMREIAPDVRHWKWPPPSPRLIASDRERAA</sequence>
<gene>
    <name evidence="1" type="primary">rnfB</name>
    <name type="ordered locus">PSPA7_1639</name>
</gene>
<feature type="chain" id="PRO_1000060348" description="Ion-translocating oxidoreductase complex subunit B">
    <location>
        <begin position="1"/>
        <end position="188"/>
    </location>
</feature>
<feature type="domain" description="4Fe-4S" evidence="1">
    <location>
        <begin position="32"/>
        <end position="90"/>
    </location>
</feature>
<feature type="domain" description="4Fe-4S ferredoxin-type 1" evidence="1">
    <location>
        <begin position="104"/>
        <end position="133"/>
    </location>
</feature>
<feature type="domain" description="4Fe-4S ferredoxin-type 2" evidence="1">
    <location>
        <begin position="134"/>
        <end position="163"/>
    </location>
</feature>
<feature type="region of interest" description="Hydrophobic" evidence="1">
    <location>
        <begin position="1"/>
        <end position="26"/>
    </location>
</feature>
<feature type="binding site" evidence="1">
    <location>
        <position position="49"/>
    </location>
    <ligand>
        <name>[4Fe-4S] cluster</name>
        <dbReference type="ChEBI" id="CHEBI:49883"/>
        <label>1</label>
    </ligand>
</feature>
<feature type="binding site" evidence="1">
    <location>
        <position position="52"/>
    </location>
    <ligand>
        <name>[4Fe-4S] cluster</name>
        <dbReference type="ChEBI" id="CHEBI:49883"/>
        <label>1</label>
    </ligand>
</feature>
<feature type="binding site" evidence="1">
    <location>
        <position position="57"/>
    </location>
    <ligand>
        <name>[4Fe-4S] cluster</name>
        <dbReference type="ChEBI" id="CHEBI:49883"/>
        <label>1</label>
    </ligand>
</feature>
<feature type="binding site" evidence="1">
    <location>
        <position position="73"/>
    </location>
    <ligand>
        <name>[4Fe-4S] cluster</name>
        <dbReference type="ChEBI" id="CHEBI:49883"/>
        <label>1</label>
    </ligand>
</feature>
<feature type="binding site" evidence="1">
    <location>
        <position position="113"/>
    </location>
    <ligand>
        <name>[4Fe-4S] cluster</name>
        <dbReference type="ChEBI" id="CHEBI:49883"/>
        <label>2</label>
    </ligand>
</feature>
<feature type="binding site" evidence="1">
    <location>
        <position position="116"/>
    </location>
    <ligand>
        <name>[4Fe-4S] cluster</name>
        <dbReference type="ChEBI" id="CHEBI:49883"/>
        <label>2</label>
    </ligand>
</feature>
<feature type="binding site" evidence="1">
    <location>
        <position position="119"/>
    </location>
    <ligand>
        <name>[4Fe-4S] cluster</name>
        <dbReference type="ChEBI" id="CHEBI:49883"/>
        <label>2</label>
    </ligand>
</feature>
<feature type="binding site" evidence="1">
    <location>
        <position position="123"/>
    </location>
    <ligand>
        <name>[4Fe-4S] cluster</name>
        <dbReference type="ChEBI" id="CHEBI:49883"/>
        <label>3</label>
    </ligand>
</feature>
<feature type="binding site" evidence="1">
    <location>
        <position position="143"/>
    </location>
    <ligand>
        <name>[4Fe-4S] cluster</name>
        <dbReference type="ChEBI" id="CHEBI:49883"/>
        <label>3</label>
    </ligand>
</feature>
<feature type="binding site" evidence="1">
    <location>
        <position position="146"/>
    </location>
    <ligand>
        <name>[4Fe-4S] cluster</name>
        <dbReference type="ChEBI" id="CHEBI:49883"/>
        <label>3</label>
    </ligand>
</feature>
<feature type="binding site" evidence="1">
    <location>
        <position position="149"/>
    </location>
    <ligand>
        <name>[4Fe-4S] cluster</name>
        <dbReference type="ChEBI" id="CHEBI:49883"/>
        <label>3</label>
    </ligand>
</feature>
<feature type="binding site" evidence="1">
    <location>
        <position position="153"/>
    </location>
    <ligand>
        <name>[4Fe-4S] cluster</name>
        <dbReference type="ChEBI" id="CHEBI:49883"/>
        <label>2</label>
    </ligand>
</feature>
<keyword id="KW-0004">4Fe-4S</keyword>
<keyword id="KW-0997">Cell inner membrane</keyword>
<keyword id="KW-1003">Cell membrane</keyword>
<keyword id="KW-0249">Electron transport</keyword>
<keyword id="KW-0408">Iron</keyword>
<keyword id="KW-0411">Iron-sulfur</keyword>
<keyword id="KW-0472">Membrane</keyword>
<keyword id="KW-0479">Metal-binding</keyword>
<keyword id="KW-0677">Repeat</keyword>
<keyword id="KW-1278">Translocase</keyword>
<keyword id="KW-0813">Transport</keyword>
<dbReference type="EC" id="7.-.-.-" evidence="1"/>
<dbReference type="EMBL" id="CP000744">
    <property type="protein sequence ID" value="ABR86334.1"/>
    <property type="molecule type" value="Genomic_DNA"/>
</dbReference>
<dbReference type="RefSeq" id="WP_003158081.1">
    <property type="nucleotide sequence ID" value="NC_009656.1"/>
</dbReference>
<dbReference type="KEGG" id="pap:PSPA7_1639"/>
<dbReference type="HOGENOM" id="CLU_063448_2_0_6"/>
<dbReference type="Proteomes" id="UP000001582">
    <property type="component" value="Chromosome"/>
</dbReference>
<dbReference type="GO" id="GO:0005886">
    <property type="term" value="C:plasma membrane"/>
    <property type="evidence" value="ECO:0007669"/>
    <property type="project" value="UniProtKB-SubCell"/>
</dbReference>
<dbReference type="GO" id="GO:0051539">
    <property type="term" value="F:4 iron, 4 sulfur cluster binding"/>
    <property type="evidence" value="ECO:0007669"/>
    <property type="project" value="UniProtKB-UniRule"/>
</dbReference>
<dbReference type="GO" id="GO:0009055">
    <property type="term" value="F:electron transfer activity"/>
    <property type="evidence" value="ECO:0007669"/>
    <property type="project" value="InterPro"/>
</dbReference>
<dbReference type="GO" id="GO:0046872">
    <property type="term" value="F:metal ion binding"/>
    <property type="evidence" value="ECO:0007669"/>
    <property type="project" value="UniProtKB-KW"/>
</dbReference>
<dbReference type="GO" id="GO:0022900">
    <property type="term" value="P:electron transport chain"/>
    <property type="evidence" value="ECO:0007669"/>
    <property type="project" value="UniProtKB-UniRule"/>
</dbReference>
<dbReference type="FunFam" id="1.10.15.40:FF:000001">
    <property type="entry name" value="Ion-translocating oxidoreductase complex subunit B"/>
    <property type="match status" value="1"/>
</dbReference>
<dbReference type="Gene3D" id="3.30.70.20">
    <property type="match status" value="1"/>
</dbReference>
<dbReference type="Gene3D" id="1.10.15.40">
    <property type="entry name" value="Electron transport complex subunit B, putative Fe-S cluster"/>
    <property type="match status" value="1"/>
</dbReference>
<dbReference type="HAMAP" id="MF_00463">
    <property type="entry name" value="RsxB_RnfB"/>
    <property type="match status" value="1"/>
</dbReference>
<dbReference type="InterPro" id="IPR007202">
    <property type="entry name" value="4Fe-4S_dom"/>
</dbReference>
<dbReference type="InterPro" id="IPR017896">
    <property type="entry name" value="4Fe4S_Fe-S-bd"/>
</dbReference>
<dbReference type="InterPro" id="IPR017900">
    <property type="entry name" value="4Fe4S_Fe_S_CS"/>
</dbReference>
<dbReference type="InterPro" id="IPR010207">
    <property type="entry name" value="Elect_transpt_cplx_RnfB/RsxB"/>
</dbReference>
<dbReference type="InterPro" id="IPR016463">
    <property type="entry name" value="RnfB/RsxB_Proteobac"/>
</dbReference>
<dbReference type="InterPro" id="IPR050294">
    <property type="entry name" value="RnfB_subfamily"/>
</dbReference>
<dbReference type="NCBIfam" id="NF003475">
    <property type="entry name" value="PRK05113.1"/>
    <property type="match status" value="1"/>
</dbReference>
<dbReference type="NCBIfam" id="TIGR01944">
    <property type="entry name" value="rnfB"/>
    <property type="match status" value="1"/>
</dbReference>
<dbReference type="PANTHER" id="PTHR42859:SF3">
    <property type="entry name" value="ION-TRANSLOCATING OXIDOREDUCTASE COMPLEX SUBUNIT B"/>
    <property type="match status" value="1"/>
</dbReference>
<dbReference type="PANTHER" id="PTHR42859">
    <property type="entry name" value="OXIDOREDUCTASE"/>
    <property type="match status" value="1"/>
</dbReference>
<dbReference type="Pfam" id="PF14697">
    <property type="entry name" value="Fer4_21"/>
    <property type="match status" value="1"/>
</dbReference>
<dbReference type="Pfam" id="PF04060">
    <property type="entry name" value="FeS"/>
    <property type="match status" value="1"/>
</dbReference>
<dbReference type="PIRSF" id="PIRSF005784">
    <property type="entry name" value="Elect_transpt_RnfB"/>
    <property type="match status" value="1"/>
</dbReference>
<dbReference type="SUPFAM" id="SSF54862">
    <property type="entry name" value="4Fe-4S ferredoxins"/>
    <property type="match status" value="1"/>
</dbReference>
<dbReference type="PROSITE" id="PS51656">
    <property type="entry name" value="4FE4S"/>
    <property type="match status" value="1"/>
</dbReference>
<dbReference type="PROSITE" id="PS00198">
    <property type="entry name" value="4FE4S_FER_1"/>
    <property type="match status" value="2"/>
</dbReference>
<dbReference type="PROSITE" id="PS51379">
    <property type="entry name" value="4FE4S_FER_2"/>
    <property type="match status" value="2"/>
</dbReference>
<accession>A6V1T8</accession>
<comment type="function">
    <text evidence="1">Part of a membrane-bound complex that couples electron transfer with translocation of ions across the membrane.</text>
</comment>
<comment type="cofactor">
    <cofactor evidence="1">
        <name>[4Fe-4S] cluster</name>
        <dbReference type="ChEBI" id="CHEBI:49883"/>
    </cofactor>
    <text evidence="1">Binds 3 [4Fe-4S] clusters.</text>
</comment>
<comment type="subunit">
    <text evidence="1">The complex is composed of six subunits: RnfA, RnfB, RnfC, RnfD, RnfE and RnfG.</text>
</comment>
<comment type="subcellular location">
    <subcellularLocation>
        <location evidence="1">Cell inner membrane</location>
    </subcellularLocation>
</comment>
<comment type="similarity">
    <text evidence="1">Belongs to the 4Fe4S bacterial-type ferredoxin family. RnfB subfamily.</text>
</comment>
<protein>
    <recommendedName>
        <fullName evidence="1">Ion-translocating oxidoreductase complex subunit B</fullName>
        <ecNumber evidence="1">7.-.-.-</ecNumber>
    </recommendedName>
    <alternativeName>
        <fullName evidence="1">Rnf electron transport complex subunit B</fullName>
    </alternativeName>
</protein>
<name>RNFB_PSEP7</name>
<proteinExistence type="inferred from homology"/>
<organism>
    <name type="scientific">Pseudomonas paraeruginosa (strain DSM 24068 / PA7)</name>
    <name type="common">Pseudomonas aeruginosa (strain PA7)</name>
    <dbReference type="NCBI Taxonomy" id="381754"/>
    <lineage>
        <taxon>Bacteria</taxon>
        <taxon>Pseudomonadati</taxon>
        <taxon>Pseudomonadota</taxon>
        <taxon>Gammaproteobacteria</taxon>
        <taxon>Pseudomonadales</taxon>
        <taxon>Pseudomonadaceae</taxon>
        <taxon>Pseudomonas</taxon>
        <taxon>Pseudomonas paraeruginosa</taxon>
    </lineage>
</organism>